<dbReference type="EMBL" id="AB028203">
    <property type="protein sequence ID" value="BAA87943.1"/>
    <property type="molecule type" value="mRNA"/>
</dbReference>
<dbReference type="EMBL" id="AB028222">
    <property type="protein sequence ID" value="BAA87948.1"/>
    <property type="molecule type" value="mRNA"/>
</dbReference>
<dbReference type="EMBL" id="AB078516">
    <property type="protein sequence ID" value="BAB84013.1"/>
    <property type="molecule type" value="Genomic_DNA"/>
</dbReference>
<dbReference type="EMBL" id="CP002684">
    <property type="protein sequence ID" value="AEE33562.1"/>
    <property type="molecule type" value="Genomic_DNA"/>
</dbReference>
<dbReference type="EMBL" id="CP002684">
    <property type="protein sequence ID" value="AEE33563.1"/>
    <property type="molecule type" value="Genomic_DNA"/>
</dbReference>
<dbReference type="PIR" id="T52437">
    <property type="entry name" value="T52437"/>
</dbReference>
<dbReference type="PIR" id="T52438">
    <property type="entry name" value="T52438"/>
</dbReference>
<dbReference type="RefSeq" id="NP_001117515.1">
    <molecule id="F4IBE4-2"/>
    <property type="nucleotide sequence ID" value="NM_001124043.2"/>
</dbReference>
<dbReference type="RefSeq" id="NP_001322914.1">
    <molecule id="F4IBE4-1"/>
    <property type="nucleotide sequence ID" value="NM_001333846.1"/>
</dbReference>
<dbReference type="RefSeq" id="NP_176151.2">
    <molecule id="F4IBE4-2"/>
    <property type="nucleotide sequence ID" value="NM_104635.3"/>
</dbReference>
<dbReference type="RefSeq" id="NP_683446.1">
    <molecule id="F4IBE4-1"/>
    <property type="nucleotide sequence ID" value="NM_148605.4"/>
</dbReference>
<dbReference type="SMR" id="F4IBE4"/>
<dbReference type="STRING" id="3702.F4IBE4"/>
<dbReference type="PaxDb" id="3702-AT1G58807.1"/>
<dbReference type="EnsemblPlants" id="AT1G58807.1">
    <property type="protein sequence ID" value="AT1G58807.1"/>
    <property type="gene ID" value="AT1G58807"/>
</dbReference>
<dbReference type="EnsemblPlants" id="AT1G58807.2">
    <molecule id="F4IBE4-2"/>
    <property type="protein sequence ID" value="AT1G58807.2"/>
    <property type="gene ID" value="AT1G58807"/>
</dbReference>
<dbReference type="EnsemblPlants" id="AT1G59124.1">
    <molecule id="F4IBE4-2"/>
    <property type="protein sequence ID" value="AT1G59124.1"/>
    <property type="gene ID" value="AT1G59124"/>
</dbReference>
<dbReference type="EnsemblPlants" id="AT1G59124.2">
    <property type="protein sequence ID" value="AT1G59124.2"/>
    <property type="gene ID" value="AT1G59124"/>
</dbReference>
<dbReference type="GeneID" id="842225"/>
<dbReference type="Gramene" id="AT1G58807.1">
    <property type="protein sequence ID" value="AT1G58807.1"/>
    <property type="gene ID" value="AT1G58807"/>
</dbReference>
<dbReference type="Gramene" id="AT1G58807.2">
    <molecule id="F4IBE4-2"/>
    <property type="protein sequence ID" value="AT1G58807.2"/>
    <property type="gene ID" value="AT1G58807"/>
</dbReference>
<dbReference type="Gramene" id="AT1G59124.1">
    <molecule id="F4IBE4-2"/>
    <property type="protein sequence ID" value="AT1G59124.1"/>
    <property type="gene ID" value="AT1G59124"/>
</dbReference>
<dbReference type="Gramene" id="AT1G59124.2">
    <property type="protein sequence ID" value="AT1G59124.2"/>
    <property type="gene ID" value="AT1G59124"/>
</dbReference>
<dbReference type="KEGG" id="ath:AT1G58807"/>
<dbReference type="KEGG" id="ath:AT1G59124"/>
<dbReference type="Araport" id="AT1G58807"/>
<dbReference type="TAIR" id="AT1G58807"/>
<dbReference type="eggNOG" id="KOG4658">
    <property type="taxonomic scope" value="Eukaryota"/>
</dbReference>
<dbReference type="HOGENOM" id="CLU_000837_35_5_1"/>
<dbReference type="InParanoid" id="F4IBE4"/>
<dbReference type="OMA" id="NFRSKEQ"/>
<dbReference type="PRO" id="PR:F4IBE4"/>
<dbReference type="Proteomes" id="UP000006548">
    <property type="component" value="Chromosome 1"/>
</dbReference>
<dbReference type="ExpressionAtlas" id="F4IBE4">
    <property type="expression patterns" value="baseline and differential"/>
</dbReference>
<dbReference type="GO" id="GO:0043531">
    <property type="term" value="F:ADP binding"/>
    <property type="evidence" value="ECO:0007669"/>
    <property type="project" value="InterPro"/>
</dbReference>
<dbReference type="GO" id="GO:0005524">
    <property type="term" value="F:ATP binding"/>
    <property type="evidence" value="ECO:0007669"/>
    <property type="project" value="UniProtKB-KW"/>
</dbReference>
<dbReference type="GO" id="GO:0098542">
    <property type="term" value="P:defense response to other organism"/>
    <property type="evidence" value="ECO:0007669"/>
    <property type="project" value="UniProtKB-ARBA"/>
</dbReference>
<dbReference type="CDD" id="cd14798">
    <property type="entry name" value="RX-CC_like"/>
    <property type="match status" value="1"/>
</dbReference>
<dbReference type="FunFam" id="3.40.50.300:FF:001091">
    <property type="entry name" value="Probable disease resistance protein At1g61300"/>
    <property type="match status" value="1"/>
</dbReference>
<dbReference type="FunFam" id="1.10.10.10:FF:000322">
    <property type="entry name" value="Probable disease resistance protein At1g63360"/>
    <property type="match status" value="1"/>
</dbReference>
<dbReference type="FunFam" id="1.10.8.430:FF:000003">
    <property type="entry name" value="Probable disease resistance protein At5g66910"/>
    <property type="match status" value="1"/>
</dbReference>
<dbReference type="Gene3D" id="1.20.5.4130">
    <property type="match status" value="1"/>
</dbReference>
<dbReference type="Gene3D" id="1.10.8.430">
    <property type="entry name" value="Helical domain of apoptotic protease-activating factors"/>
    <property type="match status" value="1"/>
</dbReference>
<dbReference type="Gene3D" id="3.40.50.300">
    <property type="entry name" value="P-loop containing nucleotide triphosphate hydrolases"/>
    <property type="match status" value="1"/>
</dbReference>
<dbReference type="Gene3D" id="3.80.10.10">
    <property type="entry name" value="Ribonuclease Inhibitor"/>
    <property type="match status" value="3"/>
</dbReference>
<dbReference type="Gene3D" id="1.10.10.10">
    <property type="entry name" value="Winged helix-like DNA-binding domain superfamily/Winged helix DNA-binding domain"/>
    <property type="match status" value="1"/>
</dbReference>
<dbReference type="InterPro" id="IPR042197">
    <property type="entry name" value="Apaf_helical"/>
</dbReference>
<dbReference type="InterPro" id="IPR032675">
    <property type="entry name" value="LRR_dom_sf"/>
</dbReference>
<dbReference type="InterPro" id="IPR055414">
    <property type="entry name" value="LRR_R13L4/SHOC2-like"/>
</dbReference>
<dbReference type="InterPro" id="IPR002182">
    <property type="entry name" value="NB-ARC"/>
</dbReference>
<dbReference type="InterPro" id="IPR027417">
    <property type="entry name" value="P-loop_NTPase"/>
</dbReference>
<dbReference type="InterPro" id="IPR038005">
    <property type="entry name" value="RX-like_CC"/>
</dbReference>
<dbReference type="InterPro" id="IPR041118">
    <property type="entry name" value="Rx_N"/>
</dbReference>
<dbReference type="InterPro" id="IPR036388">
    <property type="entry name" value="WH-like_DNA-bd_sf"/>
</dbReference>
<dbReference type="PANTHER" id="PTHR36766:SF40">
    <property type="entry name" value="DISEASE RESISTANCE PROTEIN RGA3"/>
    <property type="match status" value="1"/>
</dbReference>
<dbReference type="PANTHER" id="PTHR36766">
    <property type="entry name" value="PLANT BROAD-SPECTRUM MILDEW RESISTANCE PROTEIN RPW8"/>
    <property type="match status" value="1"/>
</dbReference>
<dbReference type="Pfam" id="PF23598">
    <property type="entry name" value="LRR_14"/>
    <property type="match status" value="1"/>
</dbReference>
<dbReference type="Pfam" id="PF00931">
    <property type="entry name" value="NB-ARC"/>
    <property type="match status" value="1"/>
</dbReference>
<dbReference type="Pfam" id="PF18052">
    <property type="entry name" value="Rx_N"/>
    <property type="match status" value="1"/>
</dbReference>
<dbReference type="Pfam" id="PF23559">
    <property type="entry name" value="WH_DRP"/>
    <property type="match status" value="1"/>
</dbReference>
<dbReference type="PRINTS" id="PR00364">
    <property type="entry name" value="DISEASERSIST"/>
</dbReference>
<dbReference type="SUPFAM" id="SSF52058">
    <property type="entry name" value="L domain-like"/>
    <property type="match status" value="2"/>
</dbReference>
<dbReference type="SUPFAM" id="SSF52540">
    <property type="entry name" value="P-loop containing nucleoside triphosphate hydrolases"/>
    <property type="match status" value="1"/>
</dbReference>
<keyword id="KW-0025">Alternative splicing</keyword>
<keyword id="KW-0067">ATP-binding</keyword>
<keyword id="KW-0175">Coiled coil</keyword>
<keyword id="KW-0433">Leucine-rich repeat</keyword>
<keyword id="KW-0547">Nucleotide-binding</keyword>
<keyword id="KW-0611">Plant defense</keyword>
<keyword id="KW-1185">Reference proteome</keyword>
<keyword id="KW-0677">Repeat</keyword>
<gene>
    <name type="primary">RF45</name>
    <name type="synonym">RXF10</name>
    <name type="ordered locus">At1g58807</name>
    <name type="ORF">R18I.6</name>
</gene>
<sequence length="1017" mass="117047">MAGELISFGIQNLWNLLSQECELFQGVEDQVTELKRDLNMLSSFLKDANAKKHTSAVVKNCVEEIKEIIYDGEDTIETFVLEQNLGKTSGIKKSIRRLACIIPDRRRYALGIGGLSNRISKVIRDMQSFGVQQAIVDGGYKQPQGDKQREMRQKFSKDDDSDFVGLEANVKKLVGYLVDEANVQVVSITGMGGLGKTTLAKQVFNHEDVKHQFDGLSWVCVSQDFTRMNVWQKILRDLKPKEEEKKIMEMTQDTLQGELIRLLETSKSLIVLDDIWEKEDWELIKPIFPPTKGWKVLLTSRNESVAMRRNTSYINFKPECLTTEDSWTLFQRIALPMKDAAEFKIDEEKEELGKLMIKHCGGLPLAIRVLGGMLAEKYTSHDWRRLSENIGSHLVGGRTNFNDDNNNTCNNVLSLSFEELPSYLKHCFLYLAHFPEDYEIKVENLSYYWAAEGIFQPRHYDGETIRDVGDVYIEELVRRNMVISERDVKTSRFETCHLHDMMREVCLLKAKEENFLQITSSRPSTANLQSTVTSRRFVYQYPTTLHVEKDINNPKLRALVVVTLGSWNLAGSSFTRLELLRVLDLIEVKIKGGKLASCIGKLIHLRYLSLEYAEVTHIPYSLGNLKLLIYLNLASFGRSTFVPNVLMGMQELRYLALPSDMGRKTKLELSNLVKLETLENFSTENSSLEDLCGMVRLSTLNIKLIEETSLETLAASIGGLKYLEKLEIYDHGSEMRTKEAGIVFDFVHLKRLWLKLYMPRLSTEQHFPSHLTTLYLESCRLEEDPMPILEKLLQLKELELGFESFSGKKMVCSSGGFPQLQRLSLLKLEEWEDWKVEESSMPLLRTLDIQVCRKLKQLPDEHLPSHLTSISLFFCCLEKDPLPTLGRLVYLKELQLGFRTFSGRIMVCSGGGFPQLQKLSIYRLEEWEEWIVEQGSMPFLHTLYIDDCPKLKKLPDGLQFIYSLKNLKISERWKERLSEGGEEYYKVQHIPSVEFYHRVLHIFRSVGGDITGRLLMR</sequence>
<protein>
    <recommendedName>
        <fullName>Probable disease resistance protein RF45</fullName>
    </recommendedName>
</protein>
<organism>
    <name type="scientific">Arabidopsis thaliana</name>
    <name type="common">Mouse-ear cress</name>
    <dbReference type="NCBI Taxonomy" id="3702"/>
    <lineage>
        <taxon>Eukaryota</taxon>
        <taxon>Viridiplantae</taxon>
        <taxon>Streptophyta</taxon>
        <taxon>Embryophyta</taxon>
        <taxon>Tracheophyta</taxon>
        <taxon>Spermatophyta</taxon>
        <taxon>Magnoliopsida</taxon>
        <taxon>eudicotyledons</taxon>
        <taxon>Gunneridae</taxon>
        <taxon>Pentapetalae</taxon>
        <taxon>rosids</taxon>
        <taxon>malvids</taxon>
        <taxon>Brassicales</taxon>
        <taxon>Brassicaceae</taxon>
        <taxon>Camelineae</taxon>
        <taxon>Arabidopsis</taxon>
    </lineage>
</organism>
<proteinExistence type="evidence at transcript level"/>
<reference key="1">
    <citation type="journal article" date="1999" name="Gene">
        <title>Isolation and analysis of cDNA within a 300 kb Arabidopsis thaliana genomic region located around the 100 map unit of chromosome 1.</title>
        <authorList>
            <person name="Kato A."/>
            <person name="Suzuki M."/>
            <person name="Kuwahara A."/>
            <person name="Ooe H."/>
            <person name="Higano-Inaba K."/>
            <person name="Komeda Y."/>
        </authorList>
    </citation>
    <scope>NUCLEOTIDE SEQUENCE [GENOMIC DNA / MRNA] (ISOFORM 2)</scope>
    <source>
        <strain>cv. Columbia</strain>
    </source>
</reference>
<reference key="2">
    <citation type="journal article" date="2000" name="Nature">
        <title>Sequence and analysis of chromosome 1 of the plant Arabidopsis thaliana.</title>
        <authorList>
            <person name="Theologis A."/>
            <person name="Ecker J.R."/>
            <person name="Palm C.J."/>
            <person name="Federspiel N.A."/>
            <person name="Kaul S."/>
            <person name="White O."/>
            <person name="Alonso J."/>
            <person name="Altafi H."/>
            <person name="Araujo R."/>
            <person name="Bowman C.L."/>
            <person name="Brooks S.Y."/>
            <person name="Buehler E."/>
            <person name="Chan A."/>
            <person name="Chao Q."/>
            <person name="Chen H."/>
            <person name="Cheuk R.F."/>
            <person name="Chin C.W."/>
            <person name="Chung M.K."/>
            <person name="Conn L."/>
            <person name="Conway A.B."/>
            <person name="Conway A.R."/>
            <person name="Creasy T.H."/>
            <person name="Dewar K."/>
            <person name="Dunn P."/>
            <person name="Etgu P."/>
            <person name="Feldblyum T.V."/>
            <person name="Feng J.-D."/>
            <person name="Fong B."/>
            <person name="Fujii C.Y."/>
            <person name="Gill J.E."/>
            <person name="Goldsmith A.D."/>
            <person name="Haas B."/>
            <person name="Hansen N.F."/>
            <person name="Hughes B."/>
            <person name="Huizar L."/>
            <person name="Hunter J.L."/>
            <person name="Jenkins J."/>
            <person name="Johnson-Hopson C."/>
            <person name="Khan S."/>
            <person name="Khaykin E."/>
            <person name="Kim C.J."/>
            <person name="Koo H.L."/>
            <person name="Kremenetskaia I."/>
            <person name="Kurtz D.B."/>
            <person name="Kwan A."/>
            <person name="Lam B."/>
            <person name="Langin-Hooper S."/>
            <person name="Lee A."/>
            <person name="Lee J.M."/>
            <person name="Lenz C.A."/>
            <person name="Li J.H."/>
            <person name="Li Y.-P."/>
            <person name="Lin X."/>
            <person name="Liu S.X."/>
            <person name="Liu Z.A."/>
            <person name="Luros J.S."/>
            <person name="Maiti R."/>
            <person name="Marziali A."/>
            <person name="Militscher J."/>
            <person name="Miranda M."/>
            <person name="Nguyen M."/>
            <person name="Nierman W.C."/>
            <person name="Osborne B.I."/>
            <person name="Pai G."/>
            <person name="Peterson J."/>
            <person name="Pham P.K."/>
            <person name="Rizzo M."/>
            <person name="Rooney T."/>
            <person name="Rowley D."/>
            <person name="Sakano H."/>
            <person name="Salzberg S.L."/>
            <person name="Schwartz J.R."/>
            <person name="Shinn P."/>
            <person name="Southwick A.M."/>
            <person name="Sun H."/>
            <person name="Tallon L.J."/>
            <person name="Tambunga G."/>
            <person name="Toriumi M.J."/>
            <person name="Town C.D."/>
            <person name="Utterback T."/>
            <person name="Van Aken S."/>
            <person name="Vaysberg M."/>
            <person name="Vysotskaia V.S."/>
            <person name="Walker M."/>
            <person name="Wu D."/>
            <person name="Yu G."/>
            <person name="Fraser C.M."/>
            <person name="Venter J.C."/>
            <person name="Davis R.W."/>
        </authorList>
    </citation>
    <scope>NUCLEOTIDE SEQUENCE [LARGE SCALE GENOMIC DNA]</scope>
    <source>
        <strain>cv. Columbia</strain>
    </source>
</reference>
<reference key="3">
    <citation type="journal article" date="2017" name="Plant J.">
        <title>Araport11: a complete reannotation of the Arabidopsis thaliana reference genome.</title>
        <authorList>
            <person name="Cheng C.Y."/>
            <person name="Krishnakumar V."/>
            <person name="Chan A.P."/>
            <person name="Thibaud-Nissen F."/>
            <person name="Schobel S."/>
            <person name="Town C.D."/>
        </authorList>
    </citation>
    <scope>GENOME REANNOTATION</scope>
    <source>
        <strain>cv. Columbia</strain>
    </source>
</reference>
<evidence type="ECO:0000255" key="1"/>
<evidence type="ECO:0000303" key="2">
    <source>
    </source>
</evidence>
<evidence type="ECO:0000305" key="3"/>
<name>DRL10_ARATH</name>
<feature type="chain" id="PRO_0000212742" description="Probable disease resistance protein RF45">
    <location>
        <begin position="1"/>
        <end position="1017"/>
    </location>
</feature>
<feature type="domain" description="NB-ARC">
    <location>
        <begin position="147"/>
        <end position="460"/>
    </location>
</feature>
<feature type="repeat" description="LRR 1">
    <location>
        <begin position="602"/>
        <end position="627"/>
    </location>
</feature>
<feature type="repeat" description="LRR 2">
    <location>
        <begin position="649"/>
        <end position="674"/>
    </location>
</feature>
<feature type="repeat" description="LRR 3">
    <location>
        <begin position="675"/>
        <end position="699"/>
    </location>
</feature>
<feature type="repeat" description="LRR 4">
    <location>
        <begin position="768"/>
        <end position="791"/>
    </location>
</feature>
<feature type="repeat" description="LRR 5">
    <location>
        <begin position="792"/>
        <end position="819"/>
    </location>
</feature>
<feature type="repeat" description="LRR 6">
    <location>
        <begin position="841"/>
        <end position="865"/>
    </location>
</feature>
<feature type="repeat" description="LRR 7">
    <location>
        <begin position="937"/>
        <end position="962"/>
    </location>
</feature>
<feature type="coiled-coil region" evidence="1">
    <location>
        <begin position="25"/>
        <end position="52"/>
    </location>
</feature>
<feature type="binding site" evidence="1">
    <location>
        <begin position="190"/>
        <end position="197"/>
    </location>
    <ligand>
        <name>ATP</name>
        <dbReference type="ChEBI" id="CHEBI:30616"/>
    </ligand>
</feature>
<feature type="splice variant" id="VSP_043689" description="In isoform 2." evidence="2">
    <original>VCRKL</original>
    <variation>IHCRL</variation>
    <location>
        <begin position="851"/>
        <end position="855"/>
    </location>
</feature>
<feature type="splice variant" id="VSP_043690" description="In isoform 2." evidence="2">
    <location>
        <begin position="856"/>
        <end position="1017"/>
    </location>
</feature>
<accession>F4IBE4</accession>
<accession>Q8W3J8</accession>
<accession>Q8W3J9</accession>
<accession>Q94HW5</accession>
<accession>Q9SLU5</accession>
<accession>Q9SLU6</accession>
<comment type="function">
    <text>Potential disease resistance protein.</text>
</comment>
<comment type="alternative products">
    <event type="alternative splicing"/>
    <isoform>
        <id>F4IBE4-1</id>
        <name>1</name>
        <sequence type="displayed"/>
    </isoform>
    <isoform>
        <id>F4IBE4-2</id>
        <name>2</name>
        <sequence type="described" ref="VSP_043689 VSP_043690"/>
    </isoform>
</comment>
<comment type="similarity">
    <text evidence="3">Belongs to the disease resistance NB-LRR family.</text>
</comment>
<comment type="online information" name="NIB-LRRS">
    <link uri="http://niblrrs.ucdavis.edu"/>
    <text>Functional and comparative genomics of disease resistance gene homologs</text>
</comment>